<proteinExistence type="inferred from homology"/>
<keyword id="KW-0489">Methyltransferase</keyword>
<keyword id="KW-0808">Transferase</keyword>
<dbReference type="EC" id="2.1.1.-" evidence="5"/>
<dbReference type="EMBL" id="MH375765">
    <property type="protein sequence ID" value="QBC88146.1"/>
    <property type="molecule type" value="Genomic_DNA"/>
</dbReference>
<dbReference type="SMR" id="A0A411KUP5"/>
<dbReference type="GO" id="GO:0008757">
    <property type="term" value="F:S-adenosylmethionine-dependent methyltransferase activity"/>
    <property type="evidence" value="ECO:0007669"/>
    <property type="project" value="InterPro"/>
</dbReference>
<dbReference type="GO" id="GO:0032259">
    <property type="term" value="P:methylation"/>
    <property type="evidence" value="ECO:0007669"/>
    <property type="project" value="UniProtKB-KW"/>
</dbReference>
<dbReference type="CDD" id="cd02440">
    <property type="entry name" value="AdoMet_MTases"/>
    <property type="match status" value="1"/>
</dbReference>
<dbReference type="Gene3D" id="3.40.50.150">
    <property type="entry name" value="Vaccinia Virus protein VP39"/>
    <property type="match status" value="1"/>
</dbReference>
<dbReference type="InterPro" id="IPR013216">
    <property type="entry name" value="Methyltransf_11"/>
</dbReference>
<dbReference type="InterPro" id="IPR029063">
    <property type="entry name" value="SAM-dependent_MTases_sf"/>
</dbReference>
<dbReference type="Pfam" id="PF08241">
    <property type="entry name" value="Methyltransf_11"/>
    <property type="match status" value="1"/>
</dbReference>
<dbReference type="SUPFAM" id="SSF53335">
    <property type="entry name" value="S-adenosyl-L-methionine-dependent methyltransferases"/>
    <property type="match status" value="1"/>
</dbReference>
<gene>
    <name evidence="3" type="primary">ucsB</name>
</gene>
<name>UCSB_ACRSP</name>
<organism>
    <name type="scientific">Acremonium sp</name>
    <dbReference type="NCBI Taxonomy" id="2046025"/>
    <lineage>
        <taxon>Eukaryota</taxon>
        <taxon>Fungi</taxon>
        <taxon>Dikarya</taxon>
        <taxon>Ascomycota</taxon>
        <taxon>Pezizomycotina</taxon>
        <taxon>Sordariomycetes</taxon>
        <taxon>Hypocreomycetidae</taxon>
        <taxon>Hypocreales</taxon>
        <taxon>Hypocreales incertae sedis</taxon>
        <taxon>Acremonium</taxon>
    </lineage>
</organism>
<reference key="1">
    <citation type="journal article" date="2018" name="J. Am. Chem. Soc.">
        <title>Genome mining and assembly-line biosynthesis of the UCS1025A pyrrolizidinone family of fungal alkaloids.</title>
        <authorList>
            <person name="Li L."/>
            <person name="Tang M.C."/>
            <person name="Tang S."/>
            <person name="Gao S."/>
            <person name="Soliman S."/>
            <person name="Hang L."/>
            <person name="Xu W."/>
            <person name="Ye T."/>
            <person name="Watanabe K."/>
            <person name="Tang Y."/>
        </authorList>
    </citation>
    <scope>NUCLEOTIDE SEQUENCE [GENOMIC DNA]</scope>
    <scope>FUNCTION</scope>
    <scope>PATHWAY</scope>
    <source>
        <strain>KY4917</strain>
    </source>
</reference>
<protein>
    <recommendedName>
        <fullName evidence="3">Methyltransferase ucsB</fullName>
        <ecNumber evidence="5">2.1.1.-</ecNumber>
    </recommendedName>
    <alternativeName>
        <fullName evidence="3">UCS1025A pyrrolizidinone biosynthesis cluster protein B</fullName>
    </alternativeName>
</protein>
<accession>A0A411KUP5</accession>
<evidence type="ECO:0000250" key="1">
    <source>
        <dbReference type="UniProtKB" id="A6VDI6"/>
    </source>
</evidence>
<evidence type="ECO:0000269" key="2">
    <source>
    </source>
</evidence>
<evidence type="ECO:0000303" key="3">
    <source>
    </source>
</evidence>
<evidence type="ECO:0000305" key="4"/>
<evidence type="ECO:0000305" key="5">
    <source>
    </source>
</evidence>
<feature type="chain" id="PRO_0000450531" description="Methyltransferase ucsB">
    <location>
        <begin position="1"/>
        <end position="288"/>
    </location>
</feature>
<feature type="binding site" evidence="1">
    <location>
        <position position="87"/>
    </location>
    <ligand>
        <name>S-adenosyl-L-methionine</name>
        <dbReference type="ChEBI" id="CHEBI:59789"/>
    </ligand>
</feature>
<feature type="binding site" evidence="1">
    <location>
        <begin position="121"/>
        <end position="122"/>
    </location>
    <ligand>
        <name>S-adenosyl-L-methionine</name>
        <dbReference type="ChEBI" id="CHEBI:59789"/>
    </ligand>
</feature>
<comment type="function">
    <text evidence="2 5">Methyltransferase; part of the gene cluster that mediates the biosynthesis of UCS1025A, a member of the pyrrolizidinone family that acts as a strong telomerase inhibitor and displays potent antibacterial and antitumor properties (PubMed:29373009). These compounds share a hemiaminal-containing pyrrolizidinone core fused with a gamma-lactone, giving a furopyrrolizidine that is connected to a decalin fragment (PubMed:29373009). The polyketide synthase module (PKS) of the PKS-NRPS ucsA is responsible for the synthesis of the polyketide backbone via the condensation of an acetyl-CoA starter unit with 6 malonyl-CoA units (PubMed:29373009). The downstream nonribosomal peptide synthetase (NRPS) module then amidates the carboxyl end of the polyketide with a 2S,3S-methylproline derived from L-isoleucine by the 2-oxoglutarate-dependent dioxygenase ucsF which converts L-isoleucine to (4S,5S)-4-methylpyrroline-5-carboxylate that is further converted to 2S,3S-methylproline by the pyrroline-5-carboxylate reductase ucsG (PubMed:29373009). Reductive release of the completed aminoacyl polyketide from the assembly line can form the 3-pyrrolin-2-one structure via an intramolecular Knoevenagel reaction (PubMed:29373009). Because ucsA lacks a designated enoylreductase (ER) domain, the required activity is provided the enoyl reductase ucsL (PubMed:29373009). This keto acyclic precursor is the substrate of the Diels-Alderase ucsH, that catalyzes the Diels-Alder cycloaddition (PubMed:29373009). Oxidation of the 3S-methyl group to a carboxylate by the cytochrome P450 monooxygenase ucsK allows an oxa-Michael cyclization that might involve the reductase/dehydrogenase ucsI and which furnishes the furopyrrolizidine (PubMed:29373009). The oxidase ucsJ likely plays a critical role in stereoselective reduction of the C5-C6 double bond to afford the required R-configured carboxylate group (Probable). Further enolization and oxidation at C5 by an unidentified enzyme affords the last intermediate that can undergo oxa-Michael cyclization to yield UCS1025A (Probable).</text>
</comment>
<comment type="pathway">
    <text evidence="5">Mycotoxin biosynthesis.</text>
</comment>
<comment type="similarity">
    <text evidence="4">Belongs to the class I-like SAM-binding methyltransferase superfamily.</text>
</comment>
<sequence>MIIQGNQLDSLPKAEDWEAFAESYKRIAEVAVMKPVQALLQCLDDRLPLSGAVGILDNGSGPGIIMSSLIERYGPQLPPDCVLTCVDYAPAMIDQVDKARIKAVEEDADSAWGRVEGKVLDALDLHSIADESQSHIAAGLLYNLTTDPAKCLSECKRTLQPGGVLAVSAWEGNDWIEMLRVVPLIKPDLKTAIQPKWSTVDAVRWDLELAGFREVHVQRIPIKIPFTSHALFVDTLMRYQPRMVAMLRTFTEDEKTELRRLLMNEMKVICPSQPGMMSGAVMVGAGVR</sequence>